<proteinExistence type="inferred from homology"/>
<organism>
    <name type="scientific">Burkholderia multivorans (strain ATCC 17616 / 249)</name>
    <dbReference type="NCBI Taxonomy" id="395019"/>
    <lineage>
        <taxon>Bacteria</taxon>
        <taxon>Pseudomonadati</taxon>
        <taxon>Pseudomonadota</taxon>
        <taxon>Betaproteobacteria</taxon>
        <taxon>Burkholderiales</taxon>
        <taxon>Burkholderiaceae</taxon>
        <taxon>Burkholderia</taxon>
        <taxon>Burkholderia cepacia complex</taxon>
    </lineage>
</organism>
<feature type="chain" id="PRO_0000148694" description="Argininosuccinate synthase">
    <location>
        <begin position="1"/>
        <end position="445"/>
    </location>
</feature>
<feature type="binding site" evidence="1">
    <location>
        <begin position="17"/>
        <end position="25"/>
    </location>
    <ligand>
        <name>ATP</name>
        <dbReference type="ChEBI" id="CHEBI:30616"/>
    </ligand>
</feature>
<feature type="binding site" evidence="1">
    <location>
        <position position="43"/>
    </location>
    <ligand>
        <name>ATP</name>
        <dbReference type="ChEBI" id="CHEBI:30616"/>
    </ligand>
</feature>
<feature type="binding site" evidence="1">
    <location>
        <position position="99"/>
    </location>
    <ligand>
        <name>L-citrulline</name>
        <dbReference type="ChEBI" id="CHEBI:57743"/>
    </ligand>
</feature>
<feature type="binding site" evidence="1">
    <location>
        <position position="129"/>
    </location>
    <ligand>
        <name>ATP</name>
        <dbReference type="ChEBI" id="CHEBI:30616"/>
    </ligand>
</feature>
<feature type="binding site" evidence="1">
    <location>
        <position position="131"/>
    </location>
    <ligand>
        <name>ATP</name>
        <dbReference type="ChEBI" id="CHEBI:30616"/>
    </ligand>
</feature>
<feature type="binding site" evidence="1">
    <location>
        <position position="131"/>
    </location>
    <ligand>
        <name>L-aspartate</name>
        <dbReference type="ChEBI" id="CHEBI:29991"/>
    </ligand>
</feature>
<feature type="binding site" evidence="1">
    <location>
        <position position="135"/>
    </location>
    <ligand>
        <name>L-aspartate</name>
        <dbReference type="ChEBI" id="CHEBI:29991"/>
    </ligand>
</feature>
<feature type="binding site" evidence="1">
    <location>
        <position position="135"/>
    </location>
    <ligand>
        <name>L-citrulline</name>
        <dbReference type="ChEBI" id="CHEBI:57743"/>
    </ligand>
</feature>
<feature type="binding site" evidence="1">
    <location>
        <position position="136"/>
    </location>
    <ligand>
        <name>ATP</name>
        <dbReference type="ChEBI" id="CHEBI:30616"/>
    </ligand>
</feature>
<feature type="binding site" evidence="1">
    <location>
        <position position="136"/>
    </location>
    <ligand>
        <name>L-aspartate</name>
        <dbReference type="ChEBI" id="CHEBI:29991"/>
    </ligand>
</feature>
<feature type="binding site" evidence="1">
    <location>
        <position position="139"/>
    </location>
    <ligand>
        <name>L-citrulline</name>
        <dbReference type="ChEBI" id="CHEBI:57743"/>
    </ligand>
</feature>
<feature type="binding site" evidence="1">
    <location>
        <position position="192"/>
    </location>
    <ligand>
        <name>L-citrulline</name>
        <dbReference type="ChEBI" id="CHEBI:57743"/>
    </ligand>
</feature>
<feature type="binding site" evidence="1">
    <location>
        <position position="194"/>
    </location>
    <ligand>
        <name>ATP</name>
        <dbReference type="ChEBI" id="CHEBI:30616"/>
    </ligand>
</feature>
<feature type="binding site" evidence="1">
    <location>
        <position position="201"/>
    </location>
    <ligand>
        <name>L-citrulline</name>
        <dbReference type="ChEBI" id="CHEBI:57743"/>
    </ligand>
</feature>
<feature type="binding site" evidence="1">
    <location>
        <position position="203"/>
    </location>
    <ligand>
        <name>L-citrulline</name>
        <dbReference type="ChEBI" id="CHEBI:57743"/>
    </ligand>
</feature>
<feature type="binding site" evidence="1">
    <location>
        <position position="280"/>
    </location>
    <ligand>
        <name>L-citrulline</name>
        <dbReference type="ChEBI" id="CHEBI:57743"/>
    </ligand>
</feature>
<keyword id="KW-0028">Amino-acid biosynthesis</keyword>
<keyword id="KW-0055">Arginine biosynthesis</keyword>
<keyword id="KW-0067">ATP-binding</keyword>
<keyword id="KW-0963">Cytoplasm</keyword>
<keyword id="KW-0436">Ligase</keyword>
<keyword id="KW-0547">Nucleotide-binding</keyword>
<keyword id="KW-1185">Reference proteome</keyword>
<reference key="1">
    <citation type="journal article" date="2003" name="J. Bacteriol.">
        <title>Distribution and organization of auxotrophic genes on the multichromosomal genome of Burkholderia multivorans ATCC 17616.</title>
        <authorList>
            <person name="Komatsu H."/>
            <person name="Imura Y."/>
            <person name="Ohori A."/>
            <person name="Nagata Y."/>
            <person name="Tsuda M."/>
        </authorList>
    </citation>
    <scope>NUCLEOTIDE SEQUENCE [GENOMIC DNA]</scope>
</reference>
<reference key="2">
    <citation type="submission" date="2007-10" db="EMBL/GenBank/DDBJ databases">
        <title>Complete sequence of chromosome 2 of Burkholderia multivorans ATCC 17616.</title>
        <authorList>
            <person name="Copeland A."/>
            <person name="Lucas S."/>
            <person name="Lapidus A."/>
            <person name="Barry K."/>
            <person name="Glavina del Rio T."/>
            <person name="Dalin E."/>
            <person name="Tice H."/>
            <person name="Pitluck S."/>
            <person name="Chain P."/>
            <person name="Malfatti S."/>
            <person name="Shin M."/>
            <person name="Vergez L."/>
            <person name="Schmutz J."/>
            <person name="Larimer F."/>
            <person name="Land M."/>
            <person name="Hauser L."/>
            <person name="Kyrpides N."/>
            <person name="Kim E."/>
            <person name="Tiedje J."/>
            <person name="Richardson P."/>
        </authorList>
    </citation>
    <scope>NUCLEOTIDE SEQUENCE [LARGE SCALE GENOMIC DNA]</scope>
    <source>
        <strain>ATCC 17616 / 249</strain>
    </source>
</reference>
<reference key="3">
    <citation type="submission" date="2007-04" db="EMBL/GenBank/DDBJ databases">
        <title>Complete genome sequence of Burkholderia multivorans ATCC 17616.</title>
        <authorList>
            <person name="Ohtsubo Y."/>
            <person name="Yamashita A."/>
            <person name="Kurokawa K."/>
            <person name="Takami H."/>
            <person name="Yuhara S."/>
            <person name="Nishiyama E."/>
            <person name="Endo R."/>
            <person name="Miyazaki R."/>
            <person name="Ono A."/>
            <person name="Yano K."/>
            <person name="Ito M."/>
            <person name="Sota M."/>
            <person name="Yuji N."/>
            <person name="Hattori M."/>
            <person name="Tsuda M."/>
        </authorList>
    </citation>
    <scope>NUCLEOTIDE SEQUENCE [LARGE SCALE GENOMIC DNA]</scope>
    <source>
        <strain>ATCC 17616 / 249</strain>
    </source>
</reference>
<dbReference type="EC" id="6.3.4.5"/>
<dbReference type="EMBL" id="AB091438">
    <property type="protein sequence ID" value="BAC65286.1"/>
    <property type="molecule type" value="Genomic_DNA"/>
</dbReference>
<dbReference type="EMBL" id="CP000869">
    <property type="protein sequence ID" value="ABX18685.1"/>
    <property type="molecule type" value="Genomic_DNA"/>
</dbReference>
<dbReference type="EMBL" id="AP009386">
    <property type="protein sequence ID" value="BAG45371.1"/>
    <property type="molecule type" value="Genomic_DNA"/>
</dbReference>
<dbReference type="RefSeq" id="WP_006397943.1">
    <property type="nucleotide sequence ID" value="NC_010805.1"/>
</dbReference>
<dbReference type="SMR" id="P59608"/>
<dbReference type="STRING" id="395019.BMULJ_03499"/>
<dbReference type="GeneID" id="89567505"/>
<dbReference type="KEGG" id="bmj:BMULJ_03499"/>
<dbReference type="KEGG" id="bmu:Bmul_5014"/>
<dbReference type="eggNOG" id="COG0137">
    <property type="taxonomic scope" value="Bacteria"/>
</dbReference>
<dbReference type="HOGENOM" id="CLU_032784_4_1_4"/>
<dbReference type="UniPathway" id="UPA00068">
    <property type="reaction ID" value="UER00113"/>
</dbReference>
<dbReference type="Proteomes" id="UP000008815">
    <property type="component" value="Chromosome 2"/>
</dbReference>
<dbReference type="GO" id="GO:0005737">
    <property type="term" value="C:cytoplasm"/>
    <property type="evidence" value="ECO:0007669"/>
    <property type="project" value="UniProtKB-SubCell"/>
</dbReference>
<dbReference type="GO" id="GO:0004055">
    <property type="term" value="F:argininosuccinate synthase activity"/>
    <property type="evidence" value="ECO:0007669"/>
    <property type="project" value="UniProtKB-UniRule"/>
</dbReference>
<dbReference type="GO" id="GO:0005524">
    <property type="term" value="F:ATP binding"/>
    <property type="evidence" value="ECO:0007669"/>
    <property type="project" value="UniProtKB-UniRule"/>
</dbReference>
<dbReference type="GO" id="GO:0042803">
    <property type="term" value="F:protein homodimerization activity"/>
    <property type="evidence" value="ECO:0007669"/>
    <property type="project" value="InterPro"/>
</dbReference>
<dbReference type="GO" id="GO:0000053">
    <property type="term" value="P:argininosuccinate metabolic process"/>
    <property type="evidence" value="ECO:0007669"/>
    <property type="project" value="TreeGrafter"/>
</dbReference>
<dbReference type="GO" id="GO:0006526">
    <property type="term" value="P:L-arginine biosynthetic process"/>
    <property type="evidence" value="ECO:0007669"/>
    <property type="project" value="UniProtKB-UniRule"/>
</dbReference>
<dbReference type="GO" id="GO:0000050">
    <property type="term" value="P:urea cycle"/>
    <property type="evidence" value="ECO:0007669"/>
    <property type="project" value="TreeGrafter"/>
</dbReference>
<dbReference type="CDD" id="cd01999">
    <property type="entry name" value="ASS"/>
    <property type="match status" value="1"/>
</dbReference>
<dbReference type="FunFam" id="1.10.287.400:FF:000001">
    <property type="entry name" value="Argininosuccinate synthase"/>
    <property type="match status" value="1"/>
</dbReference>
<dbReference type="Gene3D" id="1.10.287.400">
    <property type="match status" value="1"/>
</dbReference>
<dbReference type="Gene3D" id="3.90.1260.10">
    <property type="entry name" value="Argininosuccinate synthetase, chain A, domain 2"/>
    <property type="match status" value="1"/>
</dbReference>
<dbReference type="Gene3D" id="3.40.50.620">
    <property type="entry name" value="HUPs"/>
    <property type="match status" value="1"/>
</dbReference>
<dbReference type="HAMAP" id="MF_00581">
    <property type="entry name" value="Arg_succ_synth_type2"/>
    <property type="match status" value="1"/>
</dbReference>
<dbReference type="InterPro" id="IPR023437">
    <property type="entry name" value="Arg_succ_synth_type2_subfam"/>
</dbReference>
<dbReference type="InterPro" id="IPR048268">
    <property type="entry name" value="Arginosuc_syn_C"/>
</dbReference>
<dbReference type="InterPro" id="IPR048267">
    <property type="entry name" value="Arginosuc_syn_N"/>
</dbReference>
<dbReference type="InterPro" id="IPR001518">
    <property type="entry name" value="Arginosuc_synth"/>
</dbReference>
<dbReference type="InterPro" id="IPR018223">
    <property type="entry name" value="Arginosuc_synth_CS"/>
</dbReference>
<dbReference type="InterPro" id="IPR023434">
    <property type="entry name" value="Arginosuc_synth_type_1_subfam"/>
</dbReference>
<dbReference type="InterPro" id="IPR024074">
    <property type="entry name" value="AS_cat/multimer_dom_body"/>
</dbReference>
<dbReference type="InterPro" id="IPR024073">
    <property type="entry name" value="AS_multimer_C_tail"/>
</dbReference>
<dbReference type="InterPro" id="IPR014729">
    <property type="entry name" value="Rossmann-like_a/b/a_fold"/>
</dbReference>
<dbReference type="NCBIfam" id="TIGR00032">
    <property type="entry name" value="argG"/>
    <property type="match status" value="1"/>
</dbReference>
<dbReference type="NCBIfam" id="NF003779">
    <property type="entry name" value="PRK05370.1"/>
    <property type="match status" value="1"/>
</dbReference>
<dbReference type="PANTHER" id="PTHR11587">
    <property type="entry name" value="ARGININOSUCCINATE SYNTHASE"/>
    <property type="match status" value="1"/>
</dbReference>
<dbReference type="PANTHER" id="PTHR11587:SF2">
    <property type="entry name" value="ARGININOSUCCINATE SYNTHASE"/>
    <property type="match status" value="1"/>
</dbReference>
<dbReference type="Pfam" id="PF20979">
    <property type="entry name" value="Arginosuc_syn_C"/>
    <property type="match status" value="1"/>
</dbReference>
<dbReference type="Pfam" id="PF00764">
    <property type="entry name" value="Arginosuc_synth"/>
    <property type="match status" value="1"/>
</dbReference>
<dbReference type="SUPFAM" id="SSF52402">
    <property type="entry name" value="Adenine nucleotide alpha hydrolases-like"/>
    <property type="match status" value="1"/>
</dbReference>
<dbReference type="SUPFAM" id="SSF69864">
    <property type="entry name" value="Argininosuccinate synthetase, C-terminal domain"/>
    <property type="match status" value="1"/>
</dbReference>
<dbReference type="PROSITE" id="PS00564">
    <property type="entry name" value="ARGININOSUCCIN_SYN_1"/>
    <property type="match status" value="1"/>
</dbReference>
<dbReference type="PROSITE" id="PS00565">
    <property type="entry name" value="ARGININOSUCCIN_SYN_2"/>
    <property type="match status" value="1"/>
</dbReference>
<gene>
    <name type="primary">argG</name>
    <name type="ordered locus">Bmul_5014</name>
    <name type="ordered locus">BMULJ_03499</name>
</gene>
<sequence>MSTILESLPTGQKVGIAFSGGLDTSAALHWMKLKGAVPYAYTANLGQPDEDDYDAIPKRALEYGAAGARLIDCRAQLVAEGIAALQSGAFHITTAGVTYFNTTPIGRAVTGTMLVAAMKEDGVNIWGDGSTYKGNDIERFYRYGLLVNPDLKIYKPWLDQTFIDELGGRAEMSEFMRQSGFAYKMSAEKAYSTDSNLLGATHEAKDLESLESGIKIVNPIMGVAFWRDDVKIAAEEVTVRFEAGQPVALNGVEFKDQVELLLEANRIGGRHGLGMSDQIENRIIEAKSRGIYEAPGLALLYIAYERLVTGIHNEDTIEQYRENGRRLGRLLYQGRWFDPQAIMLRETAQRWVARAITGEVKIELRRGNDYSILSTKSPNLTYQPERLSMEKVASTFSPRDRIGQLTMRNLDITDTRDKLRVYTQVGLLTPGEASALPQIKGDSGE</sequence>
<evidence type="ECO:0000250" key="1"/>
<evidence type="ECO:0000305" key="2"/>
<name>ASSY_BURM1</name>
<accession>P59608</accession>
<accession>A9APH9</accession>
<comment type="catalytic activity">
    <reaction>
        <text>L-citrulline + L-aspartate + ATP = 2-(N(omega)-L-arginino)succinate + AMP + diphosphate + H(+)</text>
        <dbReference type="Rhea" id="RHEA:10932"/>
        <dbReference type="ChEBI" id="CHEBI:15378"/>
        <dbReference type="ChEBI" id="CHEBI:29991"/>
        <dbReference type="ChEBI" id="CHEBI:30616"/>
        <dbReference type="ChEBI" id="CHEBI:33019"/>
        <dbReference type="ChEBI" id="CHEBI:57472"/>
        <dbReference type="ChEBI" id="CHEBI:57743"/>
        <dbReference type="ChEBI" id="CHEBI:456215"/>
        <dbReference type="EC" id="6.3.4.5"/>
    </reaction>
</comment>
<comment type="pathway">
    <text>Amino-acid biosynthesis; L-arginine biosynthesis; L-arginine from L-ornithine and carbamoyl phosphate: step 2/3.</text>
</comment>
<comment type="subunit">
    <text evidence="1">Homotetramer.</text>
</comment>
<comment type="subcellular location">
    <subcellularLocation>
        <location evidence="1">Cytoplasm</location>
    </subcellularLocation>
</comment>
<comment type="similarity">
    <text evidence="2">Belongs to the argininosuccinate synthase family. Type 2 subfamily.</text>
</comment>
<protein>
    <recommendedName>
        <fullName>Argininosuccinate synthase</fullName>
        <ecNumber>6.3.4.5</ecNumber>
    </recommendedName>
    <alternativeName>
        <fullName>Citrulline--aspartate ligase</fullName>
    </alternativeName>
</protein>